<organism>
    <name type="scientific">Cereibacter sphaeroides (strain ATCC 17029 / ATH 2.4.9)</name>
    <name type="common">Rhodobacter sphaeroides</name>
    <dbReference type="NCBI Taxonomy" id="349101"/>
    <lineage>
        <taxon>Bacteria</taxon>
        <taxon>Pseudomonadati</taxon>
        <taxon>Pseudomonadota</taxon>
        <taxon>Alphaproteobacteria</taxon>
        <taxon>Rhodobacterales</taxon>
        <taxon>Paracoccaceae</taxon>
        <taxon>Cereibacter</taxon>
    </lineage>
</organism>
<accession>A3PG35</accession>
<protein>
    <recommendedName>
        <fullName evidence="1">ATP-dependent protease ATPase subunit HslU</fullName>
    </recommendedName>
    <alternativeName>
        <fullName evidence="1">Unfoldase HslU</fullName>
    </alternativeName>
</protein>
<comment type="function">
    <text evidence="1">ATPase subunit of a proteasome-like degradation complex; this subunit has chaperone activity. The binding of ATP and its subsequent hydrolysis by HslU are essential for unfolding of protein substrates subsequently hydrolyzed by HslV. HslU recognizes the N-terminal part of its protein substrates and unfolds these before they are guided to HslV for hydrolysis.</text>
</comment>
<comment type="subunit">
    <text evidence="1">A double ring-shaped homohexamer of HslV is capped on each side by a ring-shaped HslU homohexamer. The assembly of the HslU/HslV complex is dependent on binding of ATP.</text>
</comment>
<comment type="subcellular location">
    <subcellularLocation>
        <location evidence="1">Cytoplasm</location>
    </subcellularLocation>
</comment>
<comment type="similarity">
    <text evidence="1">Belongs to the ClpX chaperone family. HslU subfamily.</text>
</comment>
<gene>
    <name evidence="1" type="primary">hslU</name>
    <name type="ordered locus">Rsph17029_0182</name>
</gene>
<proteinExistence type="inferred from homology"/>
<evidence type="ECO:0000255" key="1">
    <source>
        <dbReference type="HAMAP-Rule" id="MF_00249"/>
    </source>
</evidence>
<reference key="1">
    <citation type="submission" date="2007-02" db="EMBL/GenBank/DDBJ databases">
        <title>Complete sequence of chromosome 1 of Rhodobacter sphaeroides ATCC 17029.</title>
        <authorList>
            <person name="Copeland A."/>
            <person name="Lucas S."/>
            <person name="Lapidus A."/>
            <person name="Barry K."/>
            <person name="Detter J.C."/>
            <person name="Glavina del Rio T."/>
            <person name="Hammon N."/>
            <person name="Israni S."/>
            <person name="Dalin E."/>
            <person name="Tice H."/>
            <person name="Pitluck S."/>
            <person name="Kiss H."/>
            <person name="Brettin T."/>
            <person name="Bruce D."/>
            <person name="Han C."/>
            <person name="Tapia R."/>
            <person name="Gilna P."/>
            <person name="Schmutz J."/>
            <person name="Larimer F."/>
            <person name="Land M."/>
            <person name="Hauser L."/>
            <person name="Kyrpides N."/>
            <person name="Mikhailova N."/>
            <person name="Richardson P."/>
            <person name="Mackenzie C."/>
            <person name="Choudhary M."/>
            <person name="Donohue T.J."/>
            <person name="Kaplan S."/>
        </authorList>
    </citation>
    <scope>NUCLEOTIDE SEQUENCE [LARGE SCALE GENOMIC DNA]</scope>
    <source>
        <strain>ATCC 17029 / ATH 2.4.9</strain>
    </source>
</reference>
<dbReference type="EMBL" id="CP000577">
    <property type="protein sequence ID" value="ABN75301.1"/>
    <property type="molecule type" value="Genomic_DNA"/>
</dbReference>
<dbReference type="RefSeq" id="WP_011840221.1">
    <property type="nucleotide sequence ID" value="NC_009049.1"/>
</dbReference>
<dbReference type="SMR" id="A3PG35"/>
<dbReference type="KEGG" id="rsh:Rsph17029_0182"/>
<dbReference type="HOGENOM" id="CLU_033123_0_0_5"/>
<dbReference type="GO" id="GO:0009376">
    <property type="term" value="C:HslUV protease complex"/>
    <property type="evidence" value="ECO:0007669"/>
    <property type="project" value="UniProtKB-UniRule"/>
</dbReference>
<dbReference type="GO" id="GO:0005524">
    <property type="term" value="F:ATP binding"/>
    <property type="evidence" value="ECO:0007669"/>
    <property type="project" value="UniProtKB-UniRule"/>
</dbReference>
<dbReference type="GO" id="GO:0016887">
    <property type="term" value="F:ATP hydrolysis activity"/>
    <property type="evidence" value="ECO:0007669"/>
    <property type="project" value="InterPro"/>
</dbReference>
<dbReference type="GO" id="GO:0008233">
    <property type="term" value="F:peptidase activity"/>
    <property type="evidence" value="ECO:0007669"/>
    <property type="project" value="InterPro"/>
</dbReference>
<dbReference type="GO" id="GO:0036402">
    <property type="term" value="F:proteasome-activating activity"/>
    <property type="evidence" value="ECO:0007669"/>
    <property type="project" value="UniProtKB-UniRule"/>
</dbReference>
<dbReference type="GO" id="GO:0043335">
    <property type="term" value="P:protein unfolding"/>
    <property type="evidence" value="ECO:0007669"/>
    <property type="project" value="UniProtKB-UniRule"/>
</dbReference>
<dbReference type="GO" id="GO:0051603">
    <property type="term" value="P:proteolysis involved in protein catabolic process"/>
    <property type="evidence" value="ECO:0007669"/>
    <property type="project" value="TreeGrafter"/>
</dbReference>
<dbReference type="CDD" id="cd19498">
    <property type="entry name" value="RecA-like_HslU"/>
    <property type="match status" value="1"/>
</dbReference>
<dbReference type="FunFam" id="3.40.50.300:FF:000213">
    <property type="entry name" value="ATP-dependent protease ATPase subunit HslU"/>
    <property type="match status" value="1"/>
</dbReference>
<dbReference type="FunFam" id="3.40.50.300:FF:000220">
    <property type="entry name" value="ATP-dependent protease ATPase subunit HslU"/>
    <property type="match status" value="1"/>
</dbReference>
<dbReference type="Gene3D" id="1.10.8.60">
    <property type="match status" value="1"/>
</dbReference>
<dbReference type="Gene3D" id="3.40.50.300">
    <property type="entry name" value="P-loop containing nucleotide triphosphate hydrolases"/>
    <property type="match status" value="2"/>
</dbReference>
<dbReference type="HAMAP" id="MF_00249">
    <property type="entry name" value="HslU"/>
    <property type="match status" value="1"/>
</dbReference>
<dbReference type="InterPro" id="IPR003593">
    <property type="entry name" value="AAA+_ATPase"/>
</dbReference>
<dbReference type="InterPro" id="IPR050052">
    <property type="entry name" value="ATP-dep_Clp_protease_ClpX"/>
</dbReference>
<dbReference type="InterPro" id="IPR003959">
    <property type="entry name" value="ATPase_AAA_core"/>
</dbReference>
<dbReference type="InterPro" id="IPR019489">
    <property type="entry name" value="Clp_ATPase_C"/>
</dbReference>
<dbReference type="InterPro" id="IPR004491">
    <property type="entry name" value="HslU"/>
</dbReference>
<dbReference type="InterPro" id="IPR027417">
    <property type="entry name" value="P-loop_NTPase"/>
</dbReference>
<dbReference type="NCBIfam" id="TIGR00390">
    <property type="entry name" value="hslU"/>
    <property type="match status" value="1"/>
</dbReference>
<dbReference type="NCBIfam" id="NF003544">
    <property type="entry name" value="PRK05201.1"/>
    <property type="match status" value="1"/>
</dbReference>
<dbReference type="PANTHER" id="PTHR48102">
    <property type="entry name" value="ATP-DEPENDENT CLP PROTEASE ATP-BINDING SUBUNIT CLPX-LIKE, MITOCHONDRIAL-RELATED"/>
    <property type="match status" value="1"/>
</dbReference>
<dbReference type="PANTHER" id="PTHR48102:SF3">
    <property type="entry name" value="ATP-DEPENDENT PROTEASE ATPASE SUBUNIT HSLU"/>
    <property type="match status" value="1"/>
</dbReference>
<dbReference type="Pfam" id="PF00004">
    <property type="entry name" value="AAA"/>
    <property type="match status" value="1"/>
</dbReference>
<dbReference type="Pfam" id="PF07724">
    <property type="entry name" value="AAA_2"/>
    <property type="match status" value="1"/>
</dbReference>
<dbReference type="SMART" id="SM00382">
    <property type="entry name" value="AAA"/>
    <property type="match status" value="1"/>
</dbReference>
<dbReference type="SMART" id="SM01086">
    <property type="entry name" value="ClpB_D2-small"/>
    <property type="match status" value="1"/>
</dbReference>
<dbReference type="SUPFAM" id="SSF52540">
    <property type="entry name" value="P-loop containing nucleoside triphosphate hydrolases"/>
    <property type="match status" value="1"/>
</dbReference>
<keyword id="KW-0067">ATP-binding</keyword>
<keyword id="KW-0143">Chaperone</keyword>
<keyword id="KW-0963">Cytoplasm</keyword>
<keyword id="KW-0547">Nucleotide-binding</keyword>
<keyword id="KW-0346">Stress response</keyword>
<sequence length="433" mass="48268">MTDLTPREIVSELDRFIIGQKEAKRAVAVALRNRWRRKQLADDLRDEVYPKNILMIGPTGVGKTEISRRLARLAKAPFLKVEATKFTEVGYVGRDVDSIIRDLVDAAIVETRARMREDVKARAAKAAEDRVIEAVAGRDAREQTREMFRGKLKRGELDNTVIEIDVADTSNPMQMLDPTGQGQMGMMNLGEIFGKAFGGRTQRRKMTVAESHDILMNEEADKLLDDEVVKATALEAVQQNGIVFIDEIDKVCARSDMRGADVSREGVQRDLLPLIEGTTVSTKYGPVKTDHILFIASGAFHIAKPSDLLPELQGRLPIRVELRALTEEDFVRILSETDNALTLQYKALMQTEKVGITFTEDGIAALASIAAEVNRSVENIGARRLYTVMERVFEELSFQAPDRSGEEVTVDAAYVEKNLGELARSSDLSRYVL</sequence>
<feature type="chain" id="PRO_1000012791" description="ATP-dependent protease ATPase subunit HslU">
    <location>
        <begin position="1"/>
        <end position="433"/>
    </location>
</feature>
<feature type="binding site" evidence="1">
    <location>
        <position position="18"/>
    </location>
    <ligand>
        <name>ATP</name>
        <dbReference type="ChEBI" id="CHEBI:30616"/>
    </ligand>
</feature>
<feature type="binding site" evidence="1">
    <location>
        <begin position="60"/>
        <end position="65"/>
    </location>
    <ligand>
        <name>ATP</name>
        <dbReference type="ChEBI" id="CHEBI:30616"/>
    </ligand>
</feature>
<feature type="binding site" evidence="1">
    <location>
        <position position="246"/>
    </location>
    <ligand>
        <name>ATP</name>
        <dbReference type="ChEBI" id="CHEBI:30616"/>
    </ligand>
</feature>
<feature type="binding site" evidence="1">
    <location>
        <position position="311"/>
    </location>
    <ligand>
        <name>ATP</name>
        <dbReference type="ChEBI" id="CHEBI:30616"/>
    </ligand>
</feature>
<feature type="binding site" evidence="1">
    <location>
        <position position="383"/>
    </location>
    <ligand>
        <name>ATP</name>
        <dbReference type="ChEBI" id="CHEBI:30616"/>
    </ligand>
</feature>
<name>HSLU_CERS1</name>